<comment type="catalytic activity">
    <reaction evidence="1">
        <text>L-citrulline + L-aspartate + ATP = 2-(N(omega)-L-arginino)succinate + AMP + diphosphate + H(+)</text>
        <dbReference type="Rhea" id="RHEA:10932"/>
        <dbReference type="ChEBI" id="CHEBI:15378"/>
        <dbReference type="ChEBI" id="CHEBI:29991"/>
        <dbReference type="ChEBI" id="CHEBI:30616"/>
        <dbReference type="ChEBI" id="CHEBI:33019"/>
        <dbReference type="ChEBI" id="CHEBI:57472"/>
        <dbReference type="ChEBI" id="CHEBI:57743"/>
        <dbReference type="ChEBI" id="CHEBI:456215"/>
        <dbReference type="EC" id="6.3.4.5"/>
    </reaction>
</comment>
<comment type="pathway">
    <text evidence="1">Amino-acid biosynthesis; L-arginine biosynthesis; L-arginine from L-ornithine and carbamoyl phosphate: step 2/3.</text>
</comment>
<comment type="subunit">
    <text evidence="1">Homotetramer.</text>
</comment>
<comment type="subcellular location">
    <subcellularLocation>
        <location evidence="1">Cytoplasm</location>
    </subcellularLocation>
</comment>
<comment type="similarity">
    <text evidence="1">Belongs to the argininosuccinate synthase family. Type 1 subfamily.</text>
</comment>
<gene>
    <name evidence="1" type="primary">argG</name>
    <name type="ordered locus">Swoo_0332</name>
</gene>
<dbReference type="EC" id="6.3.4.5" evidence="1"/>
<dbReference type="EMBL" id="CP000961">
    <property type="protein sequence ID" value="ACA84633.1"/>
    <property type="molecule type" value="Genomic_DNA"/>
</dbReference>
<dbReference type="RefSeq" id="WP_012322982.1">
    <property type="nucleotide sequence ID" value="NC_010506.1"/>
</dbReference>
<dbReference type="SMR" id="B1KND6"/>
<dbReference type="STRING" id="392500.Swoo_0332"/>
<dbReference type="KEGG" id="swd:Swoo_0332"/>
<dbReference type="eggNOG" id="COG0137">
    <property type="taxonomic scope" value="Bacteria"/>
</dbReference>
<dbReference type="HOGENOM" id="CLU_032784_4_2_6"/>
<dbReference type="UniPathway" id="UPA00068">
    <property type="reaction ID" value="UER00113"/>
</dbReference>
<dbReference type="Proteomes" id="UP000002168">
    <property type="component" value="Chromosome"/>
</dbReference>
<dbReference type="GO" id="GO:0005737">
    <property type="term" value="C:cytoplasm"/>
    <property type="evidence" value="ECO:0007669"/>
    <property type="project" value="UniProtKB-SubCell"/>
</dbReference>
<dbReference type="GO" id="GO:0004055">
    <property type="term" value="F:argininosuccinate synthase activity"/>
    <property type="evidence" value="ECO:0007669"/>
    <property type="project" value="UniProtKB-UniRule"/>
</dbReference>
<dbReference type="GO" id="GO:0005524">
    <property type="term" value="F:ATP binding"/>
    <property type="evidence" value="ECO:0007669"/>
    <property type="project" value="UniProtKB-UniRule"/>
</dbReference>
<dbReference type="GO" id="GO:0000053">
    <property type="term" value="P:argininosuccinate metabolic process"/>
    <property type="evidence" value="ECO:0007669"/>
    <property type="project" value="TreeGrafter"/>
</dbReference>
<dbReference type="GO" id="GO:0006526">
    <property type="term" value="P:L-arginine biosynthetic process"/>
    <property type="evidence" value="ECO:0007669"/>
    <property type="project" value="UniProtKB-UniRule"/>
</dbReference>
<dbReference type="GO" id="GO:0000050">
    <property type="term" value="P:urea cycle"/>
    <property type="evidence" value="ECO:0007669"/>
    <property type="project" value="TreeGrafter"/>
</dbReference>
<dbReference type="CDD" id="cd01999">
    <property type="entry name" value="ASS"/>
    <property type="match status" value="1"/>
</dbReference>
<dbReference type="FunFam" id="3.40.50.620:FF:000019">
    <property type="entry name" value="Argininosuccinate synthase"/>
    <property type="match status" value="1"/>
</dbReference>
<dbReference type="FunFam" id="3.90.1260.10:FF:000007">
    <property type="entry name" value="Argininosuccinate synthase"/>
    <property type="match status" value="1"/>
</dbReference>
<dbReference type="Gene3D" id="3.90.1260.10">
    <property type="entry name" value="Argininosuccinate synthetase, chain A, domain 2"/>
    <property type="match status" value="1"/>
</dbReference>
<dbReference type="Gene3D" id="3.40.50.620">
    <property type="entry name" value="HUPs"/>
    <property type="match status" value="1"/>
</dbReference>
<dbReference type="Gene3D" id="1.20.5.470">
    <property type="entry name" value="Single helix bin"/>
    <property type="match status" value="1"/>
</dbReference>
<dbReference type="HAMAP" id="MF_00005">
    <property type="entry name" value="Arg_succ_synth_type1"/>
    <property type="match status" value="1"/>
</dbReference>
<dbReference type="InterPro" id="IPR048268">
    <property type="entry name" value="Arginosuc_syn_C"/>
</dbReference>
<dbReference type="InterPro" id="IPR048267">
    <property type="entry name" value="Arginosuc_syn_N"/>
</dbReference>
<dbReference type="InterPro" id="IPR001518">
    <property type="entry name" value="Arginosuc_synth"/>
</dbReference>
<dbReference type="InterPro" id="IPR018223">
    <property type="entry name" value="Arginosuc_synth_CS"/>
</dbReference>
<dbReference type="InterPro" id="IPR023434">
    <property type="entry name" value="Arginosuc_synth_type_1_subfam"/>
</dbReference>
<dbReference type="InterPro" id="IPR024074">
    <property type="entry name" value="AS_cat/multimer_dom_body"/>
</dbReference>
<dbReference type="InterPro" id="IPR014729">
    <property type="entry name" value="Rossmann-like_a/b/a_fold"/>
</dbReference>
<dbReference type="NCBIfam" id="TIGR00032">
    <property type="entry name" value="argG"/>
    <property type="match status" value="1"/>
</dbReference>
<dbReference type="NCBIfam" id="NF001770">
    <property type="entry name" value="PRK00509.1"/>
    <property type="match status" value="1"/>
</dbReference>
<dbReference type="PANTHER" id="PTHR11587">
    <property type="entry name" value="ARGININOSUCCINATE SYNTHASE"/>
    <property type="match status" value="1"/>
</dbReference>
<dbReference type="PANTHER" id="PTHR11587:SF2">
    <property type="entry name" value="ARGININOSUCCINATE SYNTHASE"/>
    <property type="match status" value="1"/>
</dbReference>
<dbReference type="Pfam" id="PF20979">
    <property type="entry name" value="Arginosuc_syn_C"/>
    <property type="match status" value="1"/>
</dbReference>
<dbReference type="Pfam" id="PF00764">
    <property type="entry name" value="Arginosuc_synth"/>
    <property type="match status" value="1"/>
</dbReference>
<dbReference type="SUPFAM" id="SSF52402">
    <property type="entry name" value="Adenine nucleotide alpha hydrolases-like"/>
    <property type="match status" value="1"/>
</dbReference>
<dbReference type="SUPFAM" id="SSF69864">
    <property type="entry name" value="Argininosuccinate synthetase, C-terminal domain"/>
    <property type="match status" value="1"/>
</dbReference>
<dbReference type="PROSITE" id="PS00564">
    <property type="entry name" value="ARGININOSUCCIN_SYN_1"/>
    <property type="match status" value="1"/>
</dbReference>
<dbReference type="PROSITE" id="PS00565">
    <property type="entry name" value="ARGININOSUCCIN_SYN_2"/>
    <property type="match status" value="1"/>
</dbReference>
<sequence length="408" mass="44705">MSAEIKKTGVKKVVLAYSGGLDTSAIIPWLKETYDDCEIVAFCADVGQGEAELEGLHEKAIASGASECYIVDLKEELVADYIYPTIATGAIYEGTYLLGTSMARPIIAKAQVEVARKVGADAVCHGCTGKGNDQVRFEGCFAALAPDLKVIAPWREWEMVSREDLLDYLAERNIETTASATKIYSRDANAWHISHEGGELEDPWNEPTKGVWTMTVAPEDAPDKPEYVTIDIEQGKITKVNGELLSPYAALMVLNEIAGAHGVGRIDITENRLVGMKSRGCYETPGGTVMFAALRAIEELVLDKSSREWREQVGAQMAHLVYDGRWFTPLCESLLGASQPLANLVNGEVVIKLYKGQAQAVQKRSPNSLYSEEFATFGEDDVYNQKDAEGFIRLYSLASRIRALNSKS</sequence>
<name>ASSY_SHEWM</name>
<proteinExistence type="inferred from homology"/>
<organism>
    <name type="scientific">Shewanella woodyi (strain ATCC 51908 / MS32)</name>
    <dbReference type="NCBI Taxonomy" id="392500"/>
    <lineage>
        <taxon>Bacteria</taxon>
        <taxon>Pseudomonadati</taxon>
        <taxon>Pseudomonadota</taxon>
        <taxon>Gammaproteobacteria</taxon>
        <taxon>Alteromonadales</taxon>
        <taxon>Shewanellaceae</taxon>
        <taxon>Shewanella</taxon>
    </lineage>
</organism>
<accession>B1KND6</accession>
<keyword id="KW-0028">Amino-acid biosynthesis</keyword>
<keyword id="KW-0055">Arginine biosynthesis</keyword>
<keyword id="KW-0067">ATP-binding</keyword>
<keyword id="KW-0963">Cytoplasm</keyword>
<keyword id="KW-0436">Ligase</keyword>
<keyword id="KW-0547">Nucleotide-binding</keyword>
<keyword id="KW-1185">Reference proteome</keyword>
<evidence type="ECO:0000255" key="1">
    <source>
        <dbReference type="HAMAP-Rule" id="MF_00005"/>
    </source>
</evidence>
<feature type="chain" id="PRO_1000089053" description="Argininosuccinate synthase">
    <location>
        <begin position="1"/>
        <end position="408"/>
    </location>
</feature>
<feature type="binding site" evidence="1">
    <location>
        <begin position="16"/>
        <end position="24"/>
    </location>
    <ligand>
        <name>ATP</name>
        <dbReference type="ChEBI" id="CHEBI:30616"/>
    </ligand>
</feature>
<feature type="binding site" evidence="1">
    <location>
        <position position="44"/>
    </location>
    <ligand>
        <name>ATP</name>
        <dbReference type="ChEBI" id="CHEBI:30616"/>
    </ligand>
</feature>
<feature type="binding site" evidence="1">
    <location>
        <position position="96"/>
    </location>
    <ligand>
        <name>L-citrulline</name>
        <dbReference type="ChEBI" id="CHEBI:57743"/>
    </ligand>
</feature>
<feature type="binding site" evidence="1">
    <location>
        <position position="101"/>
    </location>
    <ligand>
        <name>L-citrulline</name>
        <dbReference type="ChEBI" id="CHEBI:57743"/>
    </ligand>
</feature>
<feature type="binding site" evidence="1">
    <location>
        <position position="126"/>
    </location>
    <ligand>
        <name>ATP</name>
        <dbReference type="ChEBI" id="CHEBI:30616"/>
    </ligand>
</feature>
<feature type="binding site" evidence="1">
    <location>
        <position position="128"/>
    </location>
    <ligand>
        <name>L-aspartate</name>
        <dbReference type="ChEBI" id="CHEBI:29991"/>
    </ligand>
</feature>
<feature type="binding site" evidence="1">
    <location>
        <position position="132"/>
    </location>
    <ligand>
        <name>L-aspartate</name>
        <dbReference type="ChEBI" id="CHEBI:29991"/>
    </ligand>
</feature>
<feature type="binding site" evidence="1">
    <location>
        <position position="132"/>
    </location>
    <ligand>
        <name>L-citrulline</name>
        <dbReference type="ChEBI" id="CHEBI:57743"/>
    </ligand>
</feature>
<feature type="binding site" evidence="1">
    <location>
        <position position="133"/>
    </location>
    <ligand>
        <name>L-aspartate</name>
        <dbReference type="ChEBI" id="CHEBI:29991"/>
    </ligand>
</feature>
<feature type="binding site" evidence="1">
    <location>
        <position position="136"/>
    </location>
    <ligand>
        <name>L-citrulline</name>
        <dbReference type="ChEBI" id="CHEBI:57743"/>
    </ligand>
</feature>
<feature type="binding site" evidence="1">
    <location>
        <position position="185"/>
    </location>
    <ligand>
        <name>L-citrulline</name>
        <dbReference type="ChEBI" id="CHEBI:57743"/>
    </ligand>
</feature>
<feature type="binding site" evidence="1">
    <location>
        <position position="194"/>
    </location>
    <ligand>
        <name>L-citrulline</name>
        <dbReference type="ChEBI" id="CHEBI:57743"/>
    </ligand>
</feature>
<feature type="binding site" evidence="1">
    <location>
        <position position="270"/>
    </location>
    <ligand>
        <name>L-citrulline</name>
        <dbReference type="ChEBI" id="CHEBI:57743"/>
    </ligand>
</feature>
<feature type="binding site" evidence="1">
    <location>
        <position position="282"/>
    </location>
    <ligand>
        <name>L-citrulline</name>
        <dbReference type="ChEBI" id="CHEBI:57743"/>
    </ligand>
</feature>
<protein>
    <recommendedName>
        <fullName evidence="1">Argininosuccinate synthase</fullName>
        <ecNumber evidence="1">6.3.4.5</ecNumber>
    </recommendedName>
    <alternativeName>
        <fullName evidence="1">Citrulline--aspartate ligase</fullName>
    </alternativeName>
</protein>
<reference key="1">
    <citation type="submission" date="2008-02" db="EMBL/GenBank/DDBJ databases">
        <title>Complete sequence of Shewanella woodyi ATCC 51908.</title>
        <authorList>
            <consortium name="US DOE Joint Genome Institute"/>
            <person name="Copeland A."/>
            <person name="Lucas S."/>
            <person name="Lapidus A."/>
            <person name="Glavina del Rio T."/>
            <person name="Dalin E."/>
            <person name="Tice H."/>
            <person name="Bruce D."/>
            <person name="Goodwin L."/>
            <person name="Pitluck S."/>
            <person name="Sims D."/>
            <person name="Brettin T."/>
            <person name="Detter J.C."/>
            <person name="Han C."/>
            <person name="Kuske C.R."/>
            <person name="Schmutz J."/>
            <person name="Larimer F."/>
            <person name="Land M."/>
            <person name="Hauser L."/>
            <person name="Kyrpides N."/>
            <person name="Lykidis A."/>
            <person name="Zhao J.-S."/>
            <person name="Richardson P."/>
        </authorList>
    </citation>
    <scope>NUCLEOTIDE SEQUENCE [LARGE SCALE GENOMIC DNA]</scope>
    <source>
        <strain>ATCC 51908 / MS32</strain>
    </source>
</reference>